<protein>
    <recommendedName>
        <fullName>Orotidine 5'-phosphate decarboxylase</fullName>
        <ecNumber>4.1.1.23</ecNumber>
    </recommendedName>
    <alternativeName>
        <fullName>OMP decarboxylase</fullName>
        <shortName>OMPDCase</shortName>
        <shortName>OMPdecase</shortName>
    </alternativeName>
</protein>
<name>PYRF_CLOAB</name>
<feature type="chain" id="PRO_0000134622" description="Orotidine 5'-phosphate decarboxylase">
    <location>
        <begin position="1"/>
        <end position="286"/>
    </location>
</feature>
<feature type="active site" description="Proton donor" evidence="1">
    <location>
        <position position="97"/>
    </location>
</feature>
<accession>Q97FS5</accession>
<keyword id="KW-0210">Decarboxylase</keyword>
<keyword id="KW-0456">Lyase</keyword>
<keyword id="KW-0665">Pyrimidine biosynthesis</keyword>
<keyword id="KW-1185">Reference proteome</keyword>
<gene>
    <name type="primary">pyrF</name>
    <name type="ordered locus">CA_C2652</name>
</gene>
<organism>
    <name type="scientific">Clostridium acetobutylicum (strain ATCC 824 / DSM 792 / JCM 1419 / IAM 19013 / LMG 5710 / NBRC 13948 / NRRL B-527 / VKM B-1787 / 2291 / W)</name>
    <dbReference type="NCBI Taxonomy" id="272562"/>
    <lineage>
        <taxon>Bacteria</taxon>
        <taxon>Bacillati</taxon>
        <taxon>Bacillota</taxon>
        <taxon>Clostridia</taxon>
        <taxon>Eubacteriales</taxon>
        <taxon>Clostridiaceae</taxon>
        <taxon>Clostridium</taxon>
    </lineage>
</organism>
<sequence>MIIDRLFDSVEKKGHVCLGLDTDITYVPEEFCKKFNSIEDAIFNFNKKIIDATLDVVSCYKVQIAYYEAYGLKGLLAYKRTLEYLREKKAIAIADIKRGDIAKTAEMYAKAHFEGDFEADFVTLNPYMGLDGIEPYMPYIEKMEKGLFILLRTSNKGAYDIQYIKTQGGKNVYDEVGEKIYDLGQKATGRSKYSSIGAVVGCTHVEEGVEIRNKFKNMFFLIPGYGAQGGTAKEVSLYLREGNGGVVNSSRGILLAYKKEENGEKIFDECARLAAINMRDEIRKTL</sequence>
<evidence type="ECO:0000250" key="1"/>
<evidence type="ECO:0000305" key="2"/>
<dbReference type="EC" id="4.1.1.23"/>
<dbReference type="EMBL" id="AE001437">
    <property type="protein sequence ID" value="AAK80599.1"/>
    <property type="molecule type" value="Genomic_DNA"/>
</dbReference>
<dbReference type="PIR" id="D97226">
    <property type="entry name" value="D97226"/>
</dbReference>
<dbReference type="RefSeq" id="NP_349259.1">
    <property type="nucleotide sequence ID" value="NC_003030.1"/>
</dbReference>
<dbReference type="RefSeq" id="WP_010965940.1">
    <property type="nucleotide sequence ID" value="NC_003030.1"/>
</dbReference>
<dbReference type="SMR" id="Q97FS5"/>
<dbReference type="STRING" id="272562.CA_C2652"/>
<dbReference type="DNASU" id="1118835"/>
<dbReference type="GeneID" id="44999120"/>
<dbReference type="KEGG" id="cac:CA_C2652"/>
<dbReference type="PATRIC" id="fig|272562.8.peg.2841"/>
<dbReference type="eggNOG" id="COG0284">
    <property type="taxonomic scope" value="Bacteria"/>
</dbReference>
<dbReference type="HOGENOM" id="CLU_060704_1_1_9"/>
<dbReference type="OrthoDB" id="9808470at2"/>
<dbReference type="UniPathway" id="UPA00070">
    <property type="reaction ID" value="UER00120"/>
</dbReference>
<dbReference type="Proteomes" id="UP000000814">
    <property type="component" value="Chromosome"/>
</dbReference>
<dbReference type="GO" id="GO:0004590">
    <property type="term" value="F:orotidine-5'-phosphate decarboxylase activity"/>
    <property type="evidence" value="ECO:0007669"/>
    <property type="project" value="UniProtKB-UniRule"/>
</dbReference>
<dbReference type="GO" id="GO:0006207">
    <property type="term" value="P:'de novo' pyrimidine nucleobase biosynthetic process"/>
    <property type="evidence" value="ECO:0007669"/>
    <property type="project" value="InterPro"/>
</dbReference>
<dbReference type="GO" id="GO:0044205">
    <property type="term" value="P:'de novo' UMP biosynthetic process"/>
    <property type="evidence" value="ECO:0007669"/>
    <property type="project" value="UniProtKB-UniRule"/>
</dbReference>
<dbReference type="CDD" id="cd04725">
    <property type="entry name" value="OMP_decarboxylase_like"/>
    <property type="match status" value="1"/>
</dbReference>
<dbReference type="FunFam" id="3.20.20.70:FF:000246">
    <property type="entry name" value="Orotidine 5'-phosphate decarboxylase"/>
    <property type="match status" value="1"/>
</dbReference>
<dbReference type="Gene3D" id="3.20.20.70">
    <property type="entry name" value="Aldolase class I"/>
    <property type="match status" value="1"/>
</dbReference>
<dbReference type="HAMAP" id="MF_01215">
    <property type="entry name" value="OMPdecase_type2"/>
    <property type="match status" value="1"/>
</dbReference>
<dbReference type="InterPro" id="IPR013785">
    <property type="entry name" value="Aldolase_TIM"/>
</dbReference>
<dbReference type="InterPro" id="IPR018089">
    <property type="entry name" value="OMPdecase_AS"/>
</dbReference>
<dbReference type="InterPro" id="IPR011995">
    <property type="entry name" value="OMPdecase_type-2"/>
</dbReference>
<dbReference type="InterPro" id="IPR001754">
    <property type="entry name" value="OMPdeCOase_dom"/>
</dbReference>
<dbReference type="InterPro" id="IPR011060">
    <property type="entry name" value="RibuloseP-bd_barrel"/>
</dbReference>
<dbReference type="NCBIfam" id="TIGR02127">
    <property type="entry name" value="pyrF_sub2"/>
    <property type="match status" value="1"/>
</dbReference>
<dbReference type="PANTHER" id="PTHR43375">
    <property type="entry name" value="OROTIDINE 5'-PHOSPHATE DECARBOXYLASE"/>
    <property type="match status" value="1"/>
</dbReference>
<dbReference type="PANTHER" id="PTHR43375:SF1">
    <property type="entry name" value="OROTIDINE 5'-PHOSPHATE DECARBOXYLASE"/>
    <property type="match status" value="1"/>
</dbReference>
<dbReference type="Pfam" id="PF00215">
    <property type="entry name" value="OMPdecase"/>
    <property type="match status" value="1"/>
</dbReference>
<dbReference type="SMART" id="SM00934">
    <property type="entry name" value="OMPdecase"/>
    <property type="match status" value="1"/>
</dbReference>
<dbReference type="SUPFAM" id="SSF51366">
    <property type="entry name" value="Ribulose-phoshate binding barrel"/>
    <property type="match status" value="1"/>
</dbReference>
<dbReference type="PROSITE" id="PS00156">
    <property type="entry name" value="OMPDECASE"/>
    <property type="match status" value="1"/>
</dbReference>
<proteinExistence type="inferred from homology"/>
<reference key="1">
    <citation type="journal article" date="2001" name="J. Bacteriol.">
        <title>Genome sequence and comparative analysis of the solvent-producing bacterium Clostridium acetobutylicum.</title>
        <authorList>
            <person name="Noelling J."/>
            <person name="Breton G."/>
            <person name="Omelchenko M.V."/>
            <person name="Makarova K.S."/>
            <person name="Zeng Q."/>
            <person name="Gibson R."/>
            <person name="Lee H.M."/>
            <person name="Dubois J."/>
            <person name="Qiu D."/>
            <person name="Hitti J."/>
            <person name="Wolf Y.I."/>
            <person name="Tatusov R.L."/>
            <person name="Sabathe F."/>
            <person name="Doucette-Stamm L.A."/>
            <person name="Soucaille P."/>
            <person name="Daly M.J."/>
            <person name="Bennett G.N."/>
            <person name="Koonin E.V."/>
            <person name="Smith D.R."/>
        </authorList>
    </citation>
    <scope>NUCLEOTIDE SEQUENCE [LARGE SCALE GENOMIC DNA]</scope>
    <source>
        <strain>ATCC 824 / DSM 792 / JCM 1419 / IAM 19013 / LMG 5710 / NBRC 13948 / NRRL B-527 / VKM B-1787 / 2291 / W</strain>
    </source>
</reference>
<comment type="catalytic activity">
    <reaction>
        <text>orotidine 5'-phosphate + H(+) = UMP + CO2</text>
        <dbReference type="Rhea" id="RHEA:11596"/>
        <dbReference type="ChEBI" id="CHEBI:15378"/>
        <dbReference type="ChEBI" id="CHEBI:16526"/>
        <dbReference type="ChEBI" id="CHEBI:57538"/>
        <dbReference type="ChEBI" id="CHEBI:57865"/>
        <dbReference type="EC" id="4.1.1.23"/>
    </reaction>
</comment>
<comment type="pathway">
    <text>Pyrimidine metabolism; UMP biosynthesis via de novo pathway; UMP from orotate: step 2/2.</text>
</comment>
<comment type="similarity">
    <text evidence="2">Belongs to the OMP decarboxylase family. Type 2 subfamily.</text>
</comment>